<comment type="catalytic activity">
    <reaction evidence="1">
        <text>1-(2-carboxyphenylamino)-1-deoxy-D-ribulose 5-phosphate + H(+) = (1S,2R)-1-C-(indol-3-yl)glycerol 3-phosphate + CO2 + H2O</text>
        <dbReference type="Rhea" id="RHEA:23476"/>
        <dbReference type="ChEBI" id="CHEBI:15377"/>
        <dbReference type="ChEBI" id="CHEBI:15378"/>
        <dbReference type="ChEBI" id="CHEBI:16526"/>
        <dbReference type="ChEBI" id="CHEBI:58613"/>
        <dbReference type="ChEBI" id="CHEBI:58866"/>
        <dbReference type="EC" id="4.1.1.48"/>
    </reaction>
</comment>
<comment type="pathway">
    <text evidence="1">Amino-acid biosynthesis; L-tryptophan biosynthesis; L-tryptophan from chorismate: step 4/5.</text>
</comment>
<comment type="similarity">
    <text evidence="1">Belongs to the TrpC family.</text>
</comment>
<name>TRPC_XANOM</name>
<accession>Q2NYD7</accession>
<proteinExistence type="inferred from homology"/>
<protein>
    <recommendedName>
        <fullName evidence="1">Indole-3-glycerol phosphate synthase</fullName>
        <shortName evidence="1">IGPS</shortName>
        <ecNumber evidence="1">4.1.1.48</ecNumber>
    </recommendedName>
</protein>
<feature type="chain" id="PRO_1000018573" description="Indole-3-glycerol phosphate synthase">
    <location>
        <begin position="1"/>
        <end position="265"/>
    </location>
</feature>
<evidence type="ECO:0000255" key="1">
    <source>
        <dbReference type="HAMAP-Rule" id="MF_00134"/>
    </source>
</evidence>
<organism>
    <name type="scientific">Xanthomonas oryzae pv. oryzae (strain MAFF 311018)</name>
    <dbReference type="NCBI Taxonomy" id="342109"/>
    <lineage>
        <taxon>Bacteria</taxon>
        <taxon>Pseudomonadati</taxon>
        <taxon>Pseudomonadota</taxon>
        <taxon>Gammaproteobacteria</taxon>
        <taxon>Lysobacterales</taxon>
        <taxon>Lysobacteraceae</taxon>
        <taxon>Xanthomonas</taxon>
    </lineage>
</organism>
<gene>
    <name evidence="1" type="primary">trpC</name>
    <name type="ordered locus">XOO3935</name>
</gene>
<sequence length="265" mass="28724">MSDILNTILARKADEVAERSARVPLAELIARSADLPLTRGFAAAMQASIAAGDPAVIAEVKKASPSKGVIRPDFHPADIAVSYEFGGATCLSVLTDVDFFQGSDAYLRQARDACTLPVLRKDFTVDPYQVYEARVLGADCILLIVSALKDAQLADLSGLAMQLGLDVLVEVHDVDELERAVQVPVPLIGINNRNLRTFEVTLQTTLDMRAAVPRDRVLVTESGIVTQADVQLMRSNDVNAFLVGETFMRAAEPGESLRQLFFAHD</sequence>
<reference key="1">
    <citation type="journal article" date="2005" name="Jpn. Agric. Res. Q.">
        <title>Genome sequence of Xanthomonas oryzae pv. oryzae suggests contribution of large numbers of effector genes and insertion sequences to its race diversity.</title>
        <authorList>
            <person name="Ochiai H."/>
            <person name="Inoue Y."/>
            <person name="Takeya M."/>
            <person name="Sasaki A."/>
            <person name="Kaku H."/>
        </authorList>
    </citation>
    <scope>NUCLEOTIDE SEQUENCE [LARGE SCALE GENOMIC DNA]</scope>
    <source>
        <strain>MAFF 311018</strain>
    </source>
</reference>
<keyword id="KW-0028">Amino-acid biosynthesis</keyword>
<keyword id="KW-0057">Aromatic amino acid biosynthesis</keyword>
<keyword id="KW-0210">Decarboxylase</keyword>
<keyword id="KW-0456">Lyase</keyword>
<keyword id="KW-0822">Tryptophan biosynthesis</keyword>
<dbReference type="EC" id="4.1.1.48" evidence="1"/>
<dbReference type="EMBL" id="AP008229">
    <property type="protein sequence ID" value="BAE70690.1"/>
    <property type="molecule type" value="Genomic_DNA"/>
</dbReference>
<dbReference type="SMR" id="Q2NYD7"/>
<dbReference type="KEGG" id="xom:XOO3935"/>
<dbReference type="HOGENOM" id="CLU_034247_2_0_6"/>
<dbReference type="UniPathway" id="UPA00035">
    <property type="reaction ID" value="UER00043"/>
</dbReference>
<dbReference type="GO" id="GO:0004425">
    <property type="term" value="F:indole-3-glycerol-phosphate synthase activity"/>
    <property type="evidence" value="ECO:0007669"/>
    <property type="project" value="UniProtKB-UniRule"/>
</dbReference>
<dbReference type="GO" id="GO:0004640">
    <property type="term" value="F:phosphoribosylanthranilate isomerase activity"/>
    <property type="evidence" value="ECO:0007669"/>
    <property type="project" value="TreeGrafter"/>
</dbReference>
<dbReference type="GO" id="GO:0000162">
    <property type="term" value="P:L-tryptophan biosynthetic process"/>
    <property type="evidence" value="ECO:0007669"/>
    <property type="project" value="UniProtKB-UniRule"/>
</dbReference>
<dbReference type="CDD" id="cd00331">
    <property type="entry name" value="IGPS"/>
    <property type="match status" value="1"/>
</dbReference>
<dbReference type="FunFam" id="3.20.20.70:FF:000024">
    <property type="entry name" value="Indole-3-glycerol phosphate synthase"/>
    <property type="match status" value="1"/>
</dbReference>
<dbReference type="Gene3D" id="3.20.20.70">
    <property type="entry name" value="Aldolase class I"/>
    <property type="match status" value="1"/>
</dbReference>
<dbReference type="HAMAP" id="MF_00134_B">
    <property type="entry name" value="IGPS_B"/>
    <property type="match status" value="1"/>
</dbReference>
<dbReference type="InterPro" id="IPR013785">
    <property type="entry name" value="Aldolase_TIM"/>
</dbReference>
<dbReference type="InterPro" id="IPR045186">
    <property type="entry name" value="Indole-3-glycerol_P_synth"/>
</dbReference>
<dbReference type="InterPro" id="IPR013798">
    <property type="entry name" value="Indole-3-glycerol_P_synth_dom"/>
</dbReference>
<dbReference type="InterPro" id="IPR001468">
    <property type="entry name" value="Indole-3-GlycerolPSynthase_CS"/>
</dbReference>
<dbReference type="InterPro" id="IPR011060">
    <property type="entry name" value="RibuloseP-bd_barrel"/>
</dbReference>
<dbReference type="NCBIfam" id="NF001370">
    <property type="entry name" value="PRK00278.1-2"/>
    <property type="match status" value="1"/>
</dbReference>
<dbReference type="NCBIfam" id="NF001373">
    <property type="entry name" value="PRK00278.1-6"/>
    <property type="match status" value="1"/>
</dbReference>
<dbReference type="NCBIfam" id="NF001377">
    <property type="entry name" value="PRK00278.2-4"/>
    <property type="match status" value="1"/>
</dbReference>
<dbReference type="PANTHER" id="PTHR22854:SF2">
    <property type="entry name" value="INDOLE-3-GLYCEROL-PHOSPHATE SYNTHASE"/>
    <property type="match status" value="1"/>
</dbReference>
<dbReference type="PANTHER" id="PTHR22854">
    <property type="entry name" value="TRYPTOPHAN BIOSYNTHESIS PROTEIN"/>
    <property type="match status" value="1"/>
</dbReference>
<dbReference type="Pfam" id="PF00218">
    <property type="entry name" value="IGPS"/>
    <property type="match status" value="1"/>
</dbReference>
<dbReference type="SUPFAM" id="SSF51366">
    <property type="entry name" value="Ribulose-phoshate binding barrel"/>
    <property type="match status" value="1"/>
</dbReference>
<dbReference type="PROSITE" id="PS00614">
    <property type="entry name" value="IGPS"/>
    <property type="match status" value="1"/>
</dbReference>